<organism>
    <name type="scientific">Escherichia coli (strain SMS-3-5 / SECEC)</name>
    <dbReference type="NCBI Taxonomy" id="439855"/>
    <lineage>
        <taxon>Bacteria</taxon>
        <taxon>Pseudomonadati</taxon>
        <taxon>Pseudomonadota</taxon>
        <taxon>Gammaproteobacteria</taxon>
        <taxon>Enterobacterales</taxon>
        <taxon>Enterobacteriaceae</taxon>
        <taxon>Escherichia</taxon>
    </lineage>
</organism>
<dbReference type="EMBL" id="CP000970">
    <property type="protein sequence ID" value="ACB17980.1"/>
    <property type="molecule type" value="Genomic_DNA"/>
</dbReference>
<dbReference type="RefSeq" id="WP_000906177.1">
    <property type="nucleotide sequence ID" value="NC_010498.1"/>
</dbReference>
<dbReference type="SMR" id="B1LFT7"/>
<dbReference type="KEGG" id="ecm:EcSMS35_0005"/>
<dbReference type="HOGENOM" id="CLU_061989_0_0_6"/>
<dbReference type="Proteomes" id="UP000007011">
    <property type="component" value="Chromosome"/>
</dbReference>
<dbReference type="GO" id="GO:0005829">
    <property type="term" value="C:cytosol"/>
    <property type="evidence" value="ECO:0007669"/>
    <property type="project" value="TreeGrafter"/>
</dbReference>
<dbReference type="GO" id="GO:0033194">
    <property type="term" value="P:response to hydroperoxide"/>
    <property type="evidence" value="ECO:0007669"/>
    <property type="project" value="TreeGrafter"/>
</dbReference>
<dbReference type="HAMAP" id="MF_00652">
    <property type="entry name" value="UPF0246"/>
    <property type="match status" value="1"/>
</dbReference>
<dbReference type="InterPro" id="IPR005583">
    <property type="entry name" value="YaaA"/>
</dbReference>
<dbReference type="NCBIfam" id="NF002541">
    <property type="entry name" value="PRK02101.1-1"/>
    <property type="match status" value="1"/>
</dbReference>
<dbReference type="NCBIfam" id="NF002542">
    <property type="entry name" value="PRK02101.1-3"/>
    <property type="match status" value="1"/>
</dbReference>
<dbReference type="PANTHER" id="PTHR30283:SF4">
    <property type="entry name" value="PEROXIDE STRESS RESISTANCE PROTEIN YAAA"/>
    <property type="match status" value="1"/>
</dbReference>
<dbReference type="PANTHER" id="PTHR30283">
    <property type="entry name" value="PEROXIDE STRESS RESPONSE PROTEIN YAAA"/>
    <property type="match status" value="1"/>
</dbReference>
<dbReference type="Pfam" id="PF03883">
    <property type="entry name" value="H2O2_YaaD"/>
    <property type="match status" value="1"/>
</dbReference>
<comment type="similarity">
    <text evidence="1">Belongs to the UPF0246 family.</text>
</comment>
<feature type="chain" id="PRO_1000131118" description="UPF0246 protein YaaA">
    <location>
        <begin position="1"/>
        <end position="258"/>
    </location>
</feature>
<gene>
    <name evidence="1" type="primary">yaaA</name>
    <name type="ordered locus">EcSMS35_0005</name>
</gene>
<name>YAAA_ECOSM</name>
<protein>
    <recommendedName>
        <fullName evidence="1">UPF0246 protein YaaA</fullName>
    </recommendedName>
</protein>
<reference key="1">
    <citation type="journal article" date="2008" name="J. Bacteriol.">
        <title>Insights into the environmental resistance gene pool from the genome sequence of the multidrug-resistant environmental isolate Escherichia coli SMS-3-5.</title>
        <authorList>
            <person name="Fricke W.F."/>
            <person name="Wright M.S."/>
            <person name="Lindell A.H."/>
            <person name="Harkins D.M."/>
            <person name="Baker-Austin C."/>
            <person name="Ravel J."/>
            <person name="Stepanauskas R."/>
        </authorList>
    </citation>
    <scope>NUCLEOTIDE SEQUENCE [LARGE SCALE GENOMIC DNA]</scope>
    <source>
        <strain>SMS-3-5 / SECEC</strain>
    </source>
</reference>
<evidence type="ECO:0000255" key="1">
    <source>
        <dbReference type="HAMAP-Rule" id="MF_00652"/>
    </source>
</evidence>
<sequence>MLILISPAKTLDYQSPLPTTRYTLPELLDNSQQLIHEARKLTPPQISSLMRISDKLAGINAARFHDWQPDFTSENARQAILAFKGDVYTGLQAETFSEDDFDFAQQHLRMLSGLYGVLRPLDLMQPYRLEMGIRLENARGKDLYQFWGDIITNKLNEALAAQGDNVVINLASDEYFKSVKPKKLNAEIIKPVFLDEKNGKFKIISFYAKKARGLMSRFIIENRLTKPEQLTGFNSEGYFFDEASSSNGELVFKRYEQR</sequence>
<accession>B1LFT7</accession>
<proteinExistence type="inferred from homology"/>